<evidence type="ECO:0000255" key="1">
    <source>
        <dbReference type="HAMAP-Rule" id="MF_00276"/>
    </source>
</evidence>
<feature type="chain" id="PRO_0000197021" description="Potassium-transporting ATPase KdpC subunit">
    <location>
        <begin position="1"/>
        <end position="193"/>
    </location>
</feature>
<feature type="transmembrane region" description="Helical" evidence="1">
    <location>
        <begin position="11"/>
        <end position="31"/>
    </location>
</feature>
<protein>
    <recommendedName>
        <fullName evidence="1">Potassium-transporting ATPase KdpC subunit</fullName>
    </recommendedName>
    <alternativeName>
        <fullName evidence="1">ATP phosphohydrolase [potassium-transporting] C chain</fullName>
    </alternativeName>
    <alternativeName>
        <fullName evidence="1">Potassium-binding and translocating subunit C</fullName>
    </alternativeName>
    <alternativeName>
        <fullName evidence="1">Potassium-translocating ATPase C chain</fullName>
    </alternativeName>
</protein>
<name>KDPC_CALS4</name>
<organism>
    <name type="scientific">Caldanaerobacter subterraneus subsp. tengcongensis (strain DSM 15242 / JCM 11007 / NBRC 100824 / MB4)</name>
    <name type="common">Thermoanaerobacter tengcongensis</name>
    <dbReference type="NCBI Taxonomy" id="273068"/>
    <lineage>
        <taxon>Bacteria</taxon>
        <taxon>Bacillati</taxon>
        <taxon>Bacillota</taxon>
        <taxon>Clostridia</taxon>
        <taxon>Thermoanaerobacterales</taxon>
        <taxon>Thermoanaerobacteraceae</taxon>
        <taxon>Caldanaerobacter</taxon>
    </lineage>
</organism>
<proteinExistence type="inferred from homology"/>
<dbReference type="EMBL" id="AE008691">
    <property type="protein sequence ID" value="AAM25188.1"/>
    <property type="molecule type" value="Genomic_DNA"/>
</dbReference>
<dbReference type="RefSeq" id="WP_009610759.1">
    <property type="nucleotide sequence ID" value="NC_003869.1"/>
</dbReference>
<dbReference type="SMR" id="Q8R8I7"/>
<dbReference type="STRING" id="273068.TTE2010"/>
<dbReference type="KEGG" id="tte:TTE2010"/>
<dbReference type="eggNOG" id="COG2156">
    <property type="taxonomic scope" value="Bacteria"/>
</dbReference>
<dbReference type="HOGENOM" id="CLU_077094_1_0_9"/>
<dbReference type="OrthoDB" id="9809491at2"/>
<dbReference type="Proteomes" id="UP000000555">
    <property type="component" value="Chromosome"/>
</dbReference>
<dbReference type="GO" id="GO:0005886">
    <property type="term" value="C:plasma membrane"/>
    <property type="evidence" value="ECO:0007669"/>
    <property type="project" value="UniProtKB-SubCell"/>
</dbReference>
<dbReference type="GO" id="GO:0005524">
    <property type="term" value="F:ATP binding"/>
    <property type="evidence" value="ECO:0007669"/>
    <property type="project" value="UniProtKB-UniRule"/>
</dbReference>
<dbReference type="GO" id="GO:0008556">
    <property type="term" value="F:P-type potassium transmembrane transporter activity"/>
    <property type="evidence" value="ECO:0007669"/>
    <property type="project" value="InterPro"/>
</dbReference>
<dbReference type="HAMAP" id="MF_00276">
    <property type="entry name" value="KdpC"/>
    <property type="match status" value="1"/>
</dbReference>
<dbReference type="InterPro" id="IPR003820">
    <property type="entry name" value="KdpC"/>
</dbReference>
<dbReference type="NCBIfam" id="TIGR00681">
    <property type="entry name" value="kdpC"/>
    <property type="match status" value="1"/>
</dbReference>
<dbReference type="NCBIfam" id="NF001454">
    <property type="entry name" value="PRK00315.1"/>
    <property type="match status" value="1"/>
</dbReference>
<dbReference type="PANTHER" id="PTHR30042">
    <property type="entry name" value="POTASSIUM-TRANSPORTING ATPASE C CHAIN"/>
    <property type="match status" value="1"/>
</dbReference>
<dbReference type="PANTHER" id="PTHR30042:SF2">
    <property type="entry name" value="POTASSIUM-TRANSPORTING ATPASE KDPC SUBUNIT"/>
    <property type="match status" value="1"/>
</dbReference>
<dbReference type="Pfam" id="PF02669">
    <property type="entry name" value="KdpC"/>
    <property type="match status" value="1"/>
</dbReference>
<dbReference type="PIRSF" id="PIRSF001296">
    <property type="entry name" value="K_ATPase_KdpC"/>
    <property type="match status" value="1"/>
</dbReference>
<reference key="1">
    <citation type="journal article" date="2002" name="Genome Res.">
        <title>A complete sequence of the T. tengcongensis genome.</title>
        <authorList>
            <person name="Bao Q."/>
            <person name="Tian Y."/>
            <person name="Li W."/>
            <person name="Xu Z."/>
            <person name="Xuan Z."/>
            <person name="Hu S."/>
            <person name="Dong W."/>
            <person name="Yang J."/>
            <person name="Chen Y."/>
            <person name="Xue Y."/>
            <person name="Xu Y."/>
            <person name="Lai X."/>
            <person name="Huang L."/>
            <person name="Dong X."/>
            <person name="Ma Y."/>
            <person name="Ling L."/>
            <person name="Tan H."/>
            <person name="Chen R."/>
            <person name="Wang J."/>
            <person name="Yu J."/>
            <person name="Yang H."/>
        </authorList>
    </citation>
    <scope>NUCLEOTIDE SEQUENCE [LARGE SCALE GENOMIC DNA]</scope>
    <source>
        <strain>DSM 15242 / JCM 11007 / NBRC 100824 / MB4</strain>
    </source>
</reference>
<comment type="function">
    <text evidence="1">Part of the high-affinity ATP-driven potassium transport (or Kdp) system, which catalyzes the hydrolysis of ATP coupled with the electrogenic transport of potassium into the cytoplasm. This subunit acts as a catalytic chaperone that increases the ATP-binding affinity of the ATP-hydrolyzing subunit KdpB by the formation of a transient KdpB/KdpC/ATP ternary complex.</text>
</comment>
<comment type="subunit">
    <text evidence="1">The system is composed of three essential subunits: KdpA, KdpB and KdpC.</text>
</comment>
<comment type="subcellular location">
    <subcellularLocation>
        <location evidence="1">Cell membrane</location>
        <topology evidence="1">Single-pass membrane protein</topology>
    </subcellularLocation>
</comment>
<comment type="similarity">
    <text evidence="1">Belongs to the KdpC family.</text>
</comment>
<keyword id="KW-0067">ATP-binding</keyword>
<keyword id="KW-1003">Cell membrane</keyword>
<keyword id="KW-0406">Ion transport</keyword>
<keyword id="KW-0472">Membrane</keyword>
<keyword id="KW-0547">Nucleotide-binding</keyword>
<keyword id="KW-0630">Potassium</keyword>
<keyword id="KW-0633">Potassium transport</keyword>
<keyword id="KW-1185">Reference proteome</keyword>
<keyword id="KW-0812">Transmembrane</keyword>
<keyword id="KW-1133">Transmembrane helix</keyword>
<keyword id="KW-0813">Transport</keyword>
<sequence>MGEEIKRTIKFTLVFMVLLGLVYPFVMTGIANLLFPYQAKGSIIKVDGKPVGSELIGQKFTDPRWFMGRPSAVDYDATSSGGTNYALSNPKFHEELEKNIEEFLKKNPGVKRSEIPADIVTSSGSGLDPHISPKAAYLQVKRVAKVNGLPEEVVKKLVDKNIEGRFLGLFGEPRVNVLKLNLSLLEEIKKHKK</sequence>
<accession>Q8R8I7</accession>
<gene>
    <name evidence="1" type="primary">kdpC</name>
    <name type="ordered locus">TTE2010</name>
</gene>